<proteinExistence type="inferred from homology"/>
<evidence type="ECO:0000255" key="1">
    <source>
        <dbReference type="HAMAP-Rule" id="MF_00012"/>
    </source>
</evidence>
<accession>B9KE56</accession>
<sequence length="558" mass="60116">MRSDAIKKGHLKAPNRSLLRACGLNDDDFNKPFIGVANSYIDIIPGHFFLNEYAKIIKDEIRKNGCIPFEFNTIGVDDGIAMGHDGMLYSLPSREIIANSIETVMNAHQLDALICIPNCDKITPGMLMGALRVNVPTIFVSGGPMRAGVNKHGEKISLSSVFEAVGAYEAKKINEDDLKDIECKACPSGGSCSGMFTANSMNTLCEAMGIALEGNGTILALSKEREELLRKAARRICEIALDERFKIRNIITKKSINNALVVDMAMGGSSNTILHMLAIAYEAGVNLDIKELNHISANVAHIAKIAPSLNTVYMEDIHKAGGVSAVIAEIAKKPGHILELDTLDISGKTLKERIENASIKDENIIRKINNAYSNIGGLAILFGNLAEQGCVIKTAGIMGERKFKGKAVCFNSQEEAIKGIIKGKVKEGDVCVIRYEGPKGGPGMQEMLSPTSLLTGMGLGAKVALITDGRFSGATRGLSIGHISPEAAEGGLIALLEDGDEIEIDVDNYSINANLAQDEIAKRKANFKMPNKQINSRWLKMYQKLVSNASKGGVLDLE</sequence>
<gene>
    <name evidence="1" type="primary">ilvD</name>
    <name type="ordered locus">Cla_1541</name>
</gene>
<dbReference type="EC" id="4.2.1.9" evidence="1"/>
<dbReference type="EMBL" id="CP000932">
    <property type="protein sequence ID" value="ACM64844.1"/>
    <property type="molecule type" value="Genomic_DNA"/>
</dbReference>
<dbReference type="RefSeq" id="WP_012662227.1">
    <property type="nucleotide sequence ID" value="NC_012039.1"/>
</dbReference>
<dbReference type="SMR" id="B9KE56"/>
<dbReference type="STRING" id="306263.Cla_1541"/>
<dbReference type="PATRIC" id="fig|306263.5.peg.1523"/>
<dbReference type="eggNOG" id="COG0129">
    <property type="taxonomic scope" value="Bacteria"/>
</dbReference>
<dbReference type="HOGENOM" id="CLU_014271_4_2_7"/>
<dbReference type="UniPathway" id="UPA00047">
    <property type="reaction ID" value="UER00057"/>
</dbReference>
<dbReference type="UniPathway" id="UPA00049">
    <property type="reaction ID" value="UER00061"/>
</dbReference>
<dbReference type="Proteomes" id="UP000007727">
    <property type="component" value="Chromosome"/>
</dbReference>
<dbReference type="GO" id="GO:0005829">
    <property type="term" value="C:cytosol"/>
    <property type="evidence" value="ECO:0007669"/>
    <property type="project" value="TreeGrafter"/>
</dbReference>
<dbReference type="GO" id="GO:0051537">
    <property type="term" value="F:2 iron, 2 sulfur cluster binding"/>
    <property type="evidence" value="ECO:0007669"/>
    <property type="project" value="UniProtKB-UniRule"/>
</dbReference>
<dbReference type="GO" id="GO:0004160">
    <property type="term" value="F:dihydroxy-acid dehydratase activity"/>
    <property type="evidence" value="ECO:0007669"/>
    <property type="project" value="UniProtKB-UniRule"/>
</dbReference>
<dbReference type="GO" id="GO:0000287">
    <property type="term" value="F:magnesium ion binding"/>
    <property type="evidence" value="ECO:0007669"/>
    <property type="project" value="UniProtKB-UniRule"/>
</dbReference>
<dbReference type="GO" id="GO:0009097">
    <property type="term" value="P:isoleucine biosynthetic process"/>
    <property type="evidence" value="ECO:0007669"/>
    <property type="project" value="UniProtKB-UniRule"/>
</dbReference>
<dbReference type="GO" id="GO:0009099">
    <property type="term" value="P:L-valine biosynthetic process"/>
    <property type="evidence" value="ECO:0007669"/>
    <property type="project" value="UniProtKB-UniRule"/>
</dbReference>
<dbReference type="FunFam" id="3.50.30.80:FF:000001">
    <property type="entry name" value="Dihydroxy-acid dehydratase"/>
    <property type="match status" value="1"/>
</dbReference>
<dbReference type="Gene3D" id="3.50.30.80">
    <property type="entry name" value="IlvD/EDD C-terminal domain-like"/>
    <property type="match status" value="1"/>
</dbReference>
<dbReference type="HAMAP" id="MF_00012">
    <property type="entry name" value="IlvD"/>
    <property type="match status" value="1"/>
</dbReference>
<dbReference type="InterPro" id="IPR042096">
    <property type="entry name" value="Dihydro-acid_dehy_C"/>
</dbReference>
<dbReference type="InterPro" id="IPR004404">
    <property type="entry name" value="DihydroxyA_deHydtase"/>
</dbReference>
<dbReference type="InterPro" id="IPR020558">
    <property type="entry name" value="DiOHA_6PGluconate_deHydtase_CS"/>
</dbReference>
<dbReference type="InterPro" id="IPR056740">
    <property type="entry name" value="ILV_EDD_C"/>
</dbReference>
<dbReference type="InterPro" id="IPR000581">
    <property type="entry name" value="ILV_EDD_N"/>
</dbReference>
<dbReference type="InterPro" id="IPR037237">
    <property type="entry name" value="IlvD/EDD_N"/>
</dbReference>
<dbReference type="NCBIfam" id="TIGR00110">
    <property type="entry name" value="ilvD"/>
    <property type="match status" value="1"/>
</dbReference>
<dbReference type="NCBIfam" id="NF002068">
    <property type="entry name" value="PRK00911.1"/>
    <property type="match status" value="1"/>
</dbReference>
<dbReference type="PANTHER" id="PTHR43661">
    <property type="entry name" value="D-XYLONATE DEHYDRATASE"/>
    <property type="match status" value="1"/>
</dbReference>
<dbReference type="PANTHER" id="PTHR43661:SF3">
    <property type="entry name" value="D-XYLONATE DEHYDRATASE YAGF-RELATED"/>
    <property type="match status" value="1"/>
</dbReference>
<dbReference type="Pfam" id="PF24877">
    <property type="entry name" value="ILV_EDD_C"/>
    <property type="match status" value="1"/>
</dbReference>
<dbReference type="Pfam" id="PF00920">
    <property type="entry name" value="ILVD_EDD_N"/>
    <property type="match status" value="1"/>
</dbReference>
<dbReference type="SUPFAM" id="SSF143975">
    <property type="entry name" value="IlvD/EDD N-terminal domain-like"/>
    <property type="match status" value="1"/>
</dbReference>
<dbReference type="SUPFAM" id="SSF52016">
    <property type="entry name" value="LeuD/IlvD-like"/>
    <property type="match status" value="1"/>
</dbReference>
<dbReference type="PROSITE" id="PS00886">
    <property type="entry name" value="ILVD_EDD_1"/>
    <property type="match status" value="1"/>
</dbReference>
<dbReference type="PROSITE" id="PS00887">
    <property type="entry name" value="ILVD_EDD_2"/>
    <property type="match status" value="1"/>
</dbReference>
<comment type="function">
    <text evidence="1">Functions in the biosynthesis of branched-chain amino acids. Catalyzes the dehydration of (2R,3R)-2,3-dihydroxy-3-methylpentanoate (2,3-dihydroxy-3-methylvalerate) into 2-oxo-3-methylpentanoate (2-oxo-3-methylvalerate) and of (2R)-2,3-dihydroxy-3-methylbutanoate (2,3-dihydroxyisovalerate) into 2-oxo-3-methylbutanoate (2-oxoisovalerate), the penultimate precursor to L-isoleucine and L-valine, respectively.</text>
</comment>
<comment type="catalytic activity">
    <reaction evidence="1">
        <text>(2R)-2,3-dihydroxy-3-methylbutanoate = 3-methyl-2-oxobutanoate + H2O</text>
        <dbReference type="Rhea" id="RHEA:24809"/>
        <dbReference type="ChEBI" id="CHEBI:11851"/>
        <dbReference type="ChEBI" id="CHEBI:15377"/>
        <dbReference type="ChEBI" id="CHEBI:49072"/>
        <dbReference type="EC" id="4.2.1.9"/>
    </reaction>
    <physiologicalReaction direction="left-to-right" evidence="1">
        <dbReference type="Rhea" id="RHEA:24810"/>
    </physiologicalReaction>
</comment>
<comment type="catalytic activity">
    <reaction evidence="1">
        <text>(2R,3R)-2,3-dihydroxy-3-methylpentanoate = (S)-3-methyl-2-oxopentanoate + H2O</text>
        <dbReference type="Rhea" id="RHEA:27694"/>
        <dbReference type="ChEBI" id="CHEBI:15377"/>
        <dbReference type="ChEBI" id="CHEBI:35146"/>
        <dbReference type="ChEBI" id="CHEBI:49258"/>
        <dbReference type="EC" id="4.2.1.9"/>
    </reaction>
    <physiologicalReaction direction="left-to-right" evidence="1">
        <dbReference type="Rhea" id="RHEA:27695"/>
    </physiologicalReaction>
</comment>
<comment type="cofactor">
    <cofactor evidence="1">
        <name>[2Fe-2S] cluster</name>
        <dbReference type="ChEBI" id="CHEBI:190135"/>
    </cofactor>
    <text evidence="1">Binds 1 [2Fe-2S] cluster per subunit. This cluster acts as a Lewis acid cofactor.</text>
</comment>
<comment type="cofactor">
    <cofactor evidence="1">
        <name>Mg(2+)</name>
        <dbReference type="ChEBI" id="CHEBI:18420"/>
    </cofactor>
</comment>
<comment type="pathway">
    <text evidence="1">Amino-acid biosynthesis; L-isoleucine biosynthesis; L-isoleucine from 2-oxobutanoate: step 3/4.</text>
</comment>
<comment type="pathway">
    <text evidence="1">Amino-acid biosynthesis; L-valine biosynthesis; L-valine from pyruvate: step 3/4.</text>
</comment>
<comment type="subunit">
    <text evidence="1">Homodimer.</text>
</comment>
<comment type="similarity">
    <text evidence="1">Belongs to the IlvD/Edd family.</text>
</comment>
<keyword id="KW-0001">2Fe-2S</keyword>
<keyword id="KW-0028">Amino-acid biosynthesis</keyword>
<keyword id="KW-0100">Branched-chain amino acid biosynthesis</keyword>
<keyword id="KW-0408">Iron</keyword>
<keyword id="KW-0411">Iron-sulfur</keyword>
<keyword id="KW-0456">Lyase</keyword>
<keyword id="KW-0460">Magnesium</keyword>
<keyword id="KW-0479">Metal-binding</keyword>
<keyword id="KW-1185">Reference proteome</keyword>
<name>ILVD_CAMLR</name>
<organism>
    <name type="scientific">Campylobacter lari (strain RM2100 / D67 / ATCC BAA-1060)</name>
    <dbReference type="NCBI Taxonomy" id="306263"/>
    <lineage>
        <taxon>Bacteria</taxon>
        <taxon>Pseudomonadati</taxon>
        <taxon>Campylobacterota</taxon>
        <taxon>Epsilonproteobacteria</taxon>
        <taxon>Campylobacterales</taxon>
        <taxon>Campylobacteraceae</taxon>
        <taxon>Campylobacter</taxon>
    </lineage>
</organism>
<feature type="chain" id="PRO_1000190655" description="Dihydroxy-acid dehydratase">
    <location>
        <begin position="1"/>
        <end position="558"/>
    </location>
</feature>
<feature type="active site" description="Proton acceptor" evidence="1">
    <location>
        <position position="472"/>
    </location>
</feature>
<feature type="binding site" evidence="1">
    <location>
        <position position="78"/>
    </location>
    <ligand>
        <name>Mg(2+)</name>
        <dbReference type="ChEBI" id="CHEBI:18420"/>
    </ligand>
</feature>
<feature type="binding site" evidence="1">
    <location>
        <position position="119"/>
    </location>
    <ligand>
        <name>[2Fe-2S] cluster</name>
        <dbReference type="ChEBI" id="CHEBI:190135"/>
    </ligand>
</feature>
<feature type="binding site" evidence="1">
    <location>
        <position position="120"/>
    </location>
    <ligand>
        <name>Mg(2+)</name>
        <dbReference type="ChEBI" id="CHEBI:18420"/>
    </ligand>
</feature>
<feature type="binding site" description="via carbamate group" evidence="1">
    <location>
        <position position="121"/>
    </location>
    <ligand>
        <name>Mg(2+)</name>
        <dbReference type="ChEBI" id="CHEBI:18420"/>
    </ligand>
</feature>
<feature type="binding site" evidence="1">
    <location>
        <position position="192"/>
    </location>
    <ligand>
        <name>[2Fe-2S] cluster</name>
        <dbReference type="ChEBI" id="CHEBI:190135"/>
    </ligand>
</feature>
<feature type="binding site" evidence="1">
    <location>
        <position position="446"/>
    </location>
    <ligand>
        <name>Mg(2+)</name>
        <dbReference type="ChEBI" id="CHEBI:18420"/>
    </ligand>
</feature>
<feature type="modified residue" description="N6-carboxylysine" evidence="1">
    <location>
        <position position="121"/>
    </location>
</feature>
<reference key="1">
    <citation type="journal article" date="2008" name="Foodborne Pathog. Dis.">
        <title>The complete genome sequence and analysis of the human pathogen Campylobacter lari.</title>
        <authorList>
            <person name="Miller W.G."/>
            <person name="Wang G."/>
            <person name="Binnewies T.T."/>
            <person name="Parker C.T."/>
        </authorList>
    </citation>
    <scope>NUCLEOTIDE SEQUENCE [LARGE SCALE GENOMIC DNA]</scope>
    <source>
        <strain>RM2100 / D67 / ATCC BAA-1060</strain>
    </source>
</reference>
<protein>
    <recommendedName>
        <fullName evidence="1">Dihydroxy-acid dehydratase</fullName>
        <shortName evidence="1">DAD</shortName>
        <ecNumber evidence="1">4.2.1.9</ecNumber>
    </recommendedName>
</protein>